<comment type="function">
    <text evidence="6 10">Has sequence-specific DNA-binding activity and can function as transcriptional repressor (in vitro) (PubMed:21110952). May be a regulator of cell cycle: THAP5 overexpression in human cell lines causes cell cycle arrest at G2/M phase (PubMed:19502560).</text>
</comment>
<comment type="subunit">
    <text evidence="5 7">Interacts with HTRA2; under apoptotic conditions (PubMed:19502560). Interacts with ABRAXAS2 (PubMed:21195082).</text>
</comment>
<comment type="subcellular location">
    <subcellularLocation>
        <location evidence="5 6">Nucleus</location>
    </subcellularLocation>
</comment>
<comment type="alternative products">
    <event type="alternative splicing"/>
    <isoform>
        <id>Q7Z6K1-1</id>
        <name>1</name>
        <sequence type="displayed"/>
    </isoform>
    <isoform>
        <id>Q7Z6K1-2</id>
        <name>2</name>
        <sequence type="described" ref="VSP_033558"/>
    </isoform>
</comment>
<comment type="tissue specificity">
    <text evidence="5 7">Detected in heart (PubMed:19502560, PubMed:21195082). Detected in brain and muscle (at protein level) (PubMed:19502560). Highly expressed in the heart. Also found in brain and skeletal muscle (PubMed:19502560, PubMed:21195082).</text>
</comment>
<comment type="induction">
    <text evidence="6">Up-regulated both in response to UV light treatment and cisplatin, agents that cause DNA damage (at protein level).</text>
</comment>
<comment type="PTM">
    <text evidence="5">Cleaved by HTRA2 during apoptosis.</text>
</comment>
<comment type="sequence caution" evidence="9">
    <conflict type="erroneous initiation">
        <sequence resource="EMBL-CDS" id="AAH53634"/>
    </conflict>
    <text>Truncated N-terminus.</text>
</comment>
<comment type="sequence caution" evidence="9">
    <conflict type="erroneous gene model prediction">
        <sequence resource="EMBL-CDS" id="EAL24383"/>
    </conflict>
</comment>
<organism>
    <name type="scientific">Homo sapiens</name>
    <name type="common">Human</name>
    <dbReference type="NCBI Taxonomy" id="9606"/>
    <lineage>
        <taxon>Eukaryota</taxon>
        <taxon>Metazoa</taxon>
        <taxon>Chordata</taxon>
        <taxon>Craniata</taxon>
        <taxon>Vertebrata</taxon>
        <taxon>Euteleostomi</taxon>
        <taxon>Mammalia</taxon>
        <taxon>Eutheria</taxon>
        <taxon>Euarchontoglires</taxon>
        <taxon>Primates</taxon>
        <taxon>Haplorrhini</taxon>
        <taxon>Catarrhini</taxon>
        <taxon>Hominidae</taxon>
        <taxon>Homo</taxon>
    </lineage>
</organism>
<dbReference type="EMBL" id="CH236947">
    <property type="protein sequence ID" value="EAL24383.1"/>
    <property type="status" value="ALT_SEQ"/>
    <property type="molecule type" value="Genomic_DNA"/>
</dbReference>
<dbReference type="EMBL" id="BC053634">
    <property type="protein sequence ID" value="AAH53634.1"/>
    <property type="status" value="ALT_INIT"/>
    <property type="molecule type" value="mRNA"/>
</dbReference>
<dbReference type="CCDS" id="CCDS34734.2">
    <molecule id="Q7Z6K1-2"/>
</dbReference>
<dbReference type="CCDS" id="CCDS47687.1">
    <molecule id="Q7Z6K1-1"/>
</dbReference>
<dbReference type="RefSeq" id="NP_001123947.1">
    <molecule id="Q7Z6K1-1"/>
    <property type="nucleotide sequence ID" value="NM_001130475.3"/>
</dbReference>
<dbReference type="RefSeq" id="NP_001274527.1">
    <property type="nucleotide sequence ID" value="NM_001287598.1"/>
</dbReference>
<dbReference type="RefSeq" id="NP_001274528.1">
    <property type="nucleotide sequence ID" value="NM_001287599.1"/>
</dbReference>
<dbReference type="RefSeq" id="NP_001274530.1">
    <property type="nucleotide sequence ID" value="NM_001287601.1"/>
</dbReference>
<dbReference type="RefSeq" id="NP_872335.2">
    <molecule id="Q7Z6K1-2"/>
    <property type="nucleotide sequence ID" value="NM_182529.3"/>
</dbReference>
<dbReference type="SMR" id="Q7Z6K1"/>
<dbReference type="BioGRID" id="127964">
    <property type="interactions" value="10"/>
</dbReference>
<dbReference type="ELM" id="Q7Z6K1"/>
<dbReference type="FunCoup" id="Q7Z6K1">
    <property type="interactions" value="2117"/>
</dbReference>
<dbReference type="IntAct" id="Q7Z6K1">
    <property type="interactions" value="7"/>
</dbReference>
<dbReference type="MINT" id="Q7Z6K1"/>
<dbReference type="STRING" id="9606.ENSP00000400500"/>
<dbReference type="GlyConnect" id="2084">
    <property type="glycosylation" value="1 N-Linked glycan (1 site)"/>
</dbReference>
<dbReference type="GlyCosmos" id="Q7Z6K1">
    <property type="glycosylation" value="1 site, 2 glycans"/>
</dbReference>
<dbReference type="GlyGen" id="Q7Z6K1">
    <property type="glycosylation" value="1 site, 2 N-linked glycans (1 site)"/>
</dbReference>
<dbReference type="iPTMnet" id="Q7Z6K1"/>
<dbReference type="PhosphoSitePlus" id="Q7Z6K1"/>
<dbReference type="BioMuta" id="THAP5"/>
<dbReference type="DMDM" id="189029912"/>
<dbReference type="jPOST" id="Q7Z6K1"/>
<dbReference type="MassIVE" id="Q7Z6K1"/>
<dbReference type="PaxDb" id="9606-ENSP00000400500"/>
<dbReference type="PeptideAtlas" id="Q7Z6K1"/>
<dbReference type="ProteomicsDB" id="69431">
    <molecule id="Q7Z6K1-1"/>
</dbReference>
<dbReference type="ProteomicsDB" id="69432">
    <molecule id="Q7Z6K1-2"/>
</dbReference>
<dbReference type="Antibodypedia" id="31461">
    <property type="antibodies" value="54 antibodies from 14 providers"/>
</dbReference>
<dbReference type="DNASU" id="168451"/>
<dbReference type="Ensembl" id="ENST00000313516.5">
    <molecule id="Q7Z6K1-2"/>
    <property type="protein sequence ID" value="ENSP00000322440.5"/>
    <property type="gene ID" value="ENSG00000177683.14"/>
</dbReference>
<dbReference type="Ensembl" id="ENST00000415914.4">
    <molecule id="Q7Z6K1-1"/>
    <property type="protein sequence ID" value="ENSP00000400500.2"/>
    <property type="gene ID" value="ENSG00000177683.14"/>
</dbReference>
<dbReference type="GeneID" id="168451"/>
<dbReference type="KEGG" id="hsa:168451"/>
<dbReference type="MANE-Select" id="ENST00000415914.4">
    <property type="protein sequence ID" value="ENSP00000400500.2"/>
    <property type="RefSeq nucleotide sequence ID" value="NM_001130475.3"/>
    <property type="RefSeq protein sequence ID" value="NP_001123947.1"/>
</dbReference>
<dbReference type="UCSC" id="uc003vfl.5">
    <molecule id="Q7Z6K1-1"/>
    <property type="organism name" value="human"/>
</dbReference>
<dbReference type="AGR" id="HGNC:23188"/>
<dbReference type="CTD" id="168451"/>
<dbReference type="DisGeNET" id="168451"/>
<dbReference type="GeneCards" id="THAP5"/>
<dbReference type="HGNC" id="HGNC:23188">
    <property type="gene designation" value="THAP5"/>
</dbReference>
<dbReference type="HPA" id="ENSG00000177683">
    <property type="expression patterns" value="Low tissue specificity"/>
</dbReference>
<dbReference type="MIM" id="612534">
    <property type="type" value="gene"/>
</dbReference>
<dbReference type="neXtProt" id="NX_Q7Z6K1"/>
<dbReference type="OpenTargets" id="ENSG00000177683"/>
<dbReference type="PharmGKB" id="PA134905837"/>
<dbReference type="VEuPathDB" id="HostDB:ENSG00000177683"/>
<dbReference type="eggNOG" id="ENOG502RYVM">
    <property type="taxonomic scope" value="Eukaryota"/>
</dbReference>
<dbReference type="GeneTree" id="ENSGT00940000162392"/>
<dbReference type="HOGENOM" id="CLU_057257_0_0_1"/>
<dbReference type="InParanoid" id="Q7Z6K1"/>
<dbReference type="OMA" id="NMKRDAW"/>
<dbReference type="OrthoDB" id="5982876at2759"/>
<dbReference type="PAN-GO" id="Q7Z6K1">
    <property type="GO annotations" value="1 GO annotation based on evolutionary models"/>
</dbReference>
<dbReference type="PhylomeDB" id="Q7Z6K1"/>
<dbReference type="TreeFam" id="TF335838"/>
<dbReference type="PathwayCommons" id="Q7Z6K1"/>
<dbReference type="SignaLink" id="Q7Z6K1"/>
<dbReference type="BioGRID-ORCS" id="168451">
    <property type="hits" value="228 hits in 1144 CRISPR screens"/>
</dbReference>
<dbReference type="ChiTaRS" id="THAP5">
    <property type="organism name" value="human"/>
</dbReference>
<dbReference type="GenomeRNAi" id="168451"/>
<dbReference type="Pharos" id="Q7Z6K1">
    <property type="development level" value="Tdark"/>
</dbReference>
<dbReference type="PRO" id="PR:Q7Z6K1"/>
<dbReference type="Proteomes" id="UP000005640">
    <property type="component" value="Chromosome 7"/>
</dbReference>
<dbReference type="RNAct" id="Q7Z6K1">
    <property type="molecule type" value="protein"/>
</dbReference>
<dbReference type="Bgee" id="ENSG00000177683">
    <property type="expression patterns" value="Expressed in calcaneal tendon and 198 other cell types or tissues"/>
</dbReference>
<dbReference type="ExpressionAtlas" id="Q7Z6K1">
    <property type="expression patterns" value="baseline and differential"/>
</dbReference>
<dbReference type="GO" id="GO:0000785">
    <property type="term" value="C:chromatin"/>
    <property type="evidence" value="ECO:0000314"/>
    <property type="project" value="ARUK-UCL"/>
</dbReference>
<dbReference type="GO" id="GO:0005654">
    <property type="term" value="C:nucleoplasm"/>
    <property type="evidence" value="ECO:0000314"/>
    <property type="project" value="HPA"/>
</dbReference>
<dbReference type="GO" id="GO:0005634">
    <property type="term" value="C:nucleus"/>
    <property type="evidence" value="ECO:0000314"/>
    <property type="project" value="UniProtKB"/>
</dbReference>
<dbReference type="GO" id="GO:0003677">
    <property type="term" value="F:DNA binding"/>
    <property type="evidence" value="ECO:0007669"/>
    <property type="project" value="UniProtKB-KW"/>
</dbReference>
<dbReference type="GO" id="GO:0002020">
    <property type="term" value="F:protease binding"/>
    <property type="evidence" value="ECO:0000353"/>
    <property type="project" value="UniProtKB"/>
</dbReference>
<dbReference type="GO" id="GO:0008270">
    <property type="term" value="F:zinc ion binding"/>
    <property type="evidence" value="ECO:0007669"/>
    <property type="project" value="UniProtKB-KW"/>
</dbReference>
<dbReference type="GO" id="GO:0045786">
    <property type="term" value="P:negative regulation of cell cycle"/>
    <property type="evidence" value="ECO:0000315"/>
    <property type="project" value="UniProtKB"/>
</dbReference>
<dbReference type="GO" id="GO:0000122">
    <property type="term" value="P:negative regulation of transcription by RNA polymerase II"/>
    <property type="evidence" value="ECO:0000314"/>
    <property type="project" value="ARUK-UCL"/>
</dbReference>
<dbReference type="InterPro" id="IPR052224">
    <property type="entry name" value="THAP_domain_protein"/>
</dbReference>
<dbReference type="InterPro" id="IPR006612">
    <property type="entry name" value="THAP_Znf"/>
</dbReference>
<dbReference type="PANTHER" id="PTHR46927">
    <property type="entry name" value="AGAP005574-PA"/>
    <property type="match status" value="1"/>
</dbReference>
<dbReference type="PANTHER" id="PTHR46927:SF1">
    <property type="entry name" value="THAP DOMAIN-CONTAINING PROTEIN 5"/>
    <property type="match status" value="1"/>
</dbReference>
<dbReference type="Pfam" id="PF05485">
    <property type="entry name" value="THAP"/>
    <property type="match status" value="1"/>
</dbReference>
<dbReference type="SMART" id="SM00692">
    <property type="entry name" value="DM3"/>
    <property type="match status" value="1"/>
</dbReference>
<dbReference type="SMART" id="SM00980">
    <property type="entry name" value="THAP"/>
    <property type="match status" value="1"/>
</dbReference>
<dbReference type="SUPFAM" id="SSF57716">
    <property type="entry name" value="Glucocorticoid receptor-like (DNA-binding domain)"/>
    <property type="match status" value="1"/>
</dbReference>
<dbReference type="PROSITE" id="PS50950">
    <property type="entry name" value="ZF_THAP"/>
    <property type="match status" value="1"/>
</dbReference>
<proteinExistence type="evidence at protein level"/>
<reference key="1">
    <citation type="journal article" date="2003" name="Science">
        <title>Human chromosome 7: DNA sequence and biology.</title>
        <authorList>
            <person name="Scherer S.W."/>
            <person name="Cheung J."/>
            <person name="MacDonald J.R."/>
            <person name="Osborne L.R."/>
            <person name="Nakabayashi K."/>
            <person name="Herbrick J.-A."/>
            <person name="Carson A.R."/>
            <person name="Parker-Katiraee L."/>
            <person name="Skaug J."/>
            <person name="Khaja R."/>
            <person name="Zhang J."/>
            <person name="Hudek A.K."/>
            <person name="Li M."/>
            <person name="Haddad M."/>
            <person name="Duggan G.E."/>
            <person name="Fernandez B.A."/>
            <person name="Kanematsu E."/>
            <person name="Gentles S."/>
            <person name="Christopoulos C.C."/>
            <person name="Choufani S."/>
            <person name="Kwasnicka D."/>
            <person name="Zheng X.H."/>
            <person name="Lai Z."/>
            <person name="Nusskern D.R."/>
            <person name="Zhang Q."/>
            <person name="Gu Z."/>
            <person name="Lu F."/>
            <person name="Zeesman S."/>
            <person name="Nowaczyk M.J."/>
            <person name="Teshima I."/>
            <person name="Chitayat D."/>
            <person name="Shuman C."/>
            <person name="Weksberg R."/>
            <person name="Zackai E.H."/>
            <person name="Grebe T.A."/>
            <person name="Cox S.R."/>
            <person name="Kirkpatrick S.J."/>
            <person name="Rahman N."/>
            <person name="Friedman J.M."/>
            <person name="Heng H.H.Q."/>
            <person name="Pelicci P.G."/>
            <person name="Lo-Coco F."/>
            <person name="Belloni E."/>
            <person name="Shaffer L.G."/>
            <person name="Pober B."/>
            <person name="Morton C.C."/>
            <person name="Gusella J.F."/>
            <person name="Bruns G.A.P."/>
            <person name="Korf B.R."/>
            <person name="Quade B.J."/>
            <person name="Ligon A.H."/>
            <person name="Ferguson H."/>
            <person name="Higgins A.W."/>
            <person name="Leach N.T."/>
            <person name="Herrick S.R."/>
            <person name="Lemyre E."/>
            <person name="Farra C.G."/>
            <person name="Kim H.-G."/>
            <person name="Summers A.M."/>
            <person name="Gripp K.W."/>
            <person name="Roberts W."/>
            <person name="Szatmari P."/>
            <person name="Winsor E.J.T."/>
            <person name="Grzeschik K.-H."/>
            <person name="Teebi A."/>
            <person name="Minassian B.A."/>
            <person name="Kere J."/>
            <person name="Armengol L."/>
            <person name="Pujana M.A."/>
            <person name="Estivill X."/>
            <person name="Wilson M.D."/>
            <person name="Koop B.F."/>
            <person name="Tosi S."/>
            <person name="Moore G.E."/>
            <person name="Boright A.P."/>
            <person name="Zlotorynski E."/>
            <person name="Kerem B."/>
            <person name="Kroisel P.M."/>
            <person name="Petek E."/>
            <person name="Oscier D.G."/>
            <person name="Mould S.J."/>
            <person name="Doehner H."/>
            <person name="Doehner K."/>
            <person name="Rommens J.M."/>
            <person name="Vincent J.B."/>
            <person name="Venter J.C."/>
            <person name="Li P.W."/>
            <person name="Mural R.J."/>
            <person name="Adams M.D."/>
            <person name="Tsui L.-C."/>
        </authorList>
    </citation>
    <scope>NUCLEOTIDE SEQUENCE [LARGE SCALE GENOMIC DNA]</scope>
</reference>
<reference key="2">
    <citation type="journal article" date="2004" name="Genome Res.">
        <title>The status, quality, and expansion of the NIH full-length cDNA project: the Mammalian Gene Collection (MGC).</title>
        <authorList>
            <consortium name="The MGC Project Team"/>
        </authorList>
    </citation>
    <scope>NUCLEOTIDE SEQUENCE [LARGE SCALE MRNA] (ISOFORM 2)</scope>
    <source>
        <tissue>Brain</tissue>
    </source>
</reference>
<reference key="3">
    <citation type="journal article" date="2009" name="Am. J. Physiol.">
        <title>THAP5 is a human cardiac-specific inhibitor of cell cycle that is cleaved by the proapoptotic Omi/HtrA2 protease during cell death.</title>
        <authorList>
            <person name="Balakrishnan M.P."/>
            <person name="Cilenti L."/>
            <person name="Mashak Z."/>
            <person name="Popat P."/>
            <person name="Alnemri E.S."/>
            <person name="Zervos A.S."/>
        </authorList>
    </citation>
    <scope>POSSIBLE FUNCTION IN CELL CYCLE</scope>
    <scope>INTERACTION WITH HTRA2</scope>
    <scope>CLEAVAGE BY HTRA2</scope>
    <scope>TISSUE SPECIFICITY</scope>
    <scope>SUBCELLULAR LOCATION</scope>
</reference>
<reference key="4">
    <citation type="journal article" date="2011" name="Biochem. Biophys. Res. Commun.">
        <title>THAP5 is a DNA-binding transcriptional repressor that is regulated in melanoma cells during DNA damage-induced cell death.</title>
        <authorList>
            <person name="Balakrishnan M.P."/>
            <person name="Cilenti L."/>
            <person name="Ambivero C."/>
            <person name="Goto Y."/>
            <person name="Takata M."/>
            <person name="Turkson J."/>
            <person name="Li X.S."/>
            <person name="Zervos A.S."/>
        </authorList>
    </citation>
    <scope>FUNCTION</scope>
    <scope>DNA-BINDING</scope>
    <scope>SUBCELLULAR LOCATION</scope>
    <scope>INDUCTION BY UV AND CISPLATIN</scope>
</reference>
<reference key="5">
    <citation type="journal article" date="2011" name="J. Mol. Cell. Cardiol.">
        <title>Regulation of Abro1/KIAA0157 during myocardial infarction and cell death reveals a novel cardioprotective mechanism for Lys63-specific deubiquitination.</title>
        <authorList>
            <person name="Cilenti L."/>
            <person name="Balakrishnan M.P."/>
            <person name="Wang X.L."/>
            <person name="Ambivero C."/>
            <person name="Sterlicchi M."/>
            <person name="del Monte F."/>
            <person name="Ma X.L."/>
            <person name="Zervos A.S."/>
        </authorList>
    </citation>
    <scope>INTERACTION WITH ABRAXAS2</scope>
    <scope>TISSUE SPECIFICITY</scope>
</reference>
<gene>
    <name type="primary">THAP5</name>
</gene>
<accession>Q7Z6K1</accession>
<evidence type="ECO:0000250" key="1"/>
<evidence type="ECO:0000255" key="2"/>
<evidence type="ECO:0000255" key="3">
    <source>
        <dbReference type="PROSITE-ProRule" id="PRU00309"/>
    </source>
</evidence>
<evidence type="ECO:0000256" key="4">
    <source>
        <dbReference type="SAM" id="MobiDB-lite"/>
    </source>
</evidence>
<evidence type="ECO:0000269" key="5">
    <source>
    </source>
</evidence>
<evidence type="ECO:0000269" key="6">
    <source>
    </source>
</evidence>
<evidence type="ECO:0000269" key="7">
    <source>
    </source>
</evidence>
<evidence type="ECO:0000303" key="8">
    <source>
    </source>
</evidence>
<evidence type="ECO:0000305" key="9"/>
<evidence type="ECO:0000305" key="10">
    <source>
    </source>
</evidence>
<sequence length="395" mass="45416">MPRYCAAICCKNRRGRNNKDRKLSFYPFPLHDKERLEKWLKNMKRDSWVPSKYQFLCSDHFTPDSLDIRWGIRYLKQTAVPTIFSLPEDNQGKDPSKKKSQKKNLEDEKEVCPKAKSEESFVLNETKKNIVNTDVPHQHPELLHSSSLVKPPAPKTGSIQNNMLTLNLVKQHTGKPESTLETSVNQDTGRGGFHTCFENLNSTTITLTTSNSESIHQSLETQEVLEVTTSHLANPNFTSNSMEIKSAQENPFLFSTINQTVEELNTNKESVIAIFVPAENSKPSVNSFISAQKETTEMEDTDIEDSLYKDVDYGTEVLQIEHSYCRQDINKEHLWQKVSKLHSKITLLELKEQQTLGRLKSLEALIRQLKQENWLSEENVKIIENHFTTYEVTMI</sequence>
<feature type="chain" id="PRO_0000333817" description="THAP domain-containing protein 5">
    <location>
        <begin position="1"/>
        <end position="395"/>
    </location>
</feature>
<feature type="zinc finger region" description="THAP-type" evidence="3">
    <location>
        <begin position="1"/>
        <end position="84"/>
    </location>
</feature>
<feature type="region of interest" description="Disordered" evidence="4">
    <location>
        <begin position="85"/>
        <end position="112"/>
    </location>
</feature>
<feature type="coiled-coil region" evidence="2">
    <location>
        <begin position="348"/>
        <end position="382"/>
    </location>
</feature>
<feature type="short sequence motif" description="HCFC1-binding motif (HBM)" evidence="1">
    <location>
        <begin position="321"/>
        <end position="324"/>
    </location>
</feature>
<feature type="compositionally biased region" description="Basic and acidic residues" evidence="4">
    <location>
        <begin position="90"/>
        <end position="112"/>
    </location>
</feature>
<feature type="splice variant" id="VSP_033558" description="In isoform 2." evidence="8">
    <location>
        <begin position="1"/>
        <end position="42"/>
    </location>
</feature>
<keyword id="KW-0025">Alternative splicing</keyword>
<keyword id="KW-0131">Cell cycle</keyword>
<keyword id="KW-0175">Coiled coil</keyword>
<keyword id="KW-0238">DNA-binding</keyword>
<keyword id="KW-0479">Metal-binding</keyword>
<keyword id="KW-0539">Nucleus</keyword>
<keyword id="KW-1267">Proteomics identification</keyword>
<keyword id="KW-1185">Reference proteome</keyword>
<keyword id="KW-0678">Repressor</keyword>
<keyword id="KW-0804">Transcription</keyword>
<keyword id="KW-0805">Transcription regulation</keyword>
<keyword id="KW-0862">Zinc</keyword>
<keyword id="KW-0863">Zinc-finger</keyword>
<protein>
    <recommendedName>
        <fullName>THAP domain-containing protein 5</fullName>
    </recommendedName>
</protein>
<name>THAP5_HUMAN</name>